<comment type="function">
    <text evidence="1">Catalyzes the proton-dependent transport of sialic acid.</text>
</comment>
<comment type="catalytic activity">
    <reaction evidence="1">
        <text>N-acetylneuraminate(in) + H(+)(in) = N-acetylneuraminate(out) + H(+)(out)</text>
        <dbReference type="Rhea" id="RHEA:28987"/>
        <dbReference type="ChEBI" id="CHEBI:15378"/>
        <dbReference type="ChEBI" id="CHEBI:35418"/>
    </reaction>
</comment>
<comment type="subcellular location">
    <subcellularLocation>
        <location evidence="1">Cell inner membrane</location>
        <topology evidence="1">Multi-pass membrane protein</topology>
    </subcellularLocation>
</comment>
<comment type="similarity">
    <text evidence="1">Belongs to the major facilitator superfamily. Sialate:H(+) symporter (SHS) (TC 2.A.1.12) family.</text>
</comment>
<keyword id="KW-0997">Cell inner membrane</keyword>
<keyword id="KW-1003">Cell membrane</keyword>
<keyword id="KW-0472">Membrane</keyword>
<keyword id="KW-0762">Sugar transport</keyword>
<keyword id="KW-0812">Transmembrane</keyword>
<keyword id="KW-1133">Transmembrane helix</keyword>
<keyword id="KW-0813">Transport</keyword>
<dbReference type="EMBL" id="CU928160">
    <property type="protein sequence ID" value="CAR00180.1"/>
    <property type="molecule type" value="Genomic_DNA"/>
</dbReference>
<dbReference type="RefSeq" id="WP_000108459.1">
    <property type="nucleotide sequence ID" value="NC_011741.1"/>
</dbReference>
<dbReference type="SMR" id="B7M0T6"/>
<dbReference type="GeneID" id="75206074"/>
<dbReference type="KEGG" id="ecr:ECIAI1_3366"/>
<dbReference type="HOGENOM" id="CLU_001265_46_8_6"/>
<dbReference type="GO" id="GO:0005886">
    <property type="term" value="C:plasma membrane"/>
    <property type="evidence" value="ECO:0007669"/>
    <property type="project" value="UniProtKB-SubCell"/>
</dbReference>
<dbReference type="GO" id="GO:0046943">
    <property type="term" value="F:carboxylic acid transmembrane transporter activity"/>
    <property type="evidence" value="ECO:0007669"/>
    <property type="project" value="TreeGrafter"/>
</dbReference>
<dbReference type="GO" id="GO:0015538">
    <property type="term" value="F:sialic acid:proton symporter activity"/>
    <property type="evidence" value="ECO:0007669"/>
    <property type="project" value="UniProtKB-UniRule"/>
</dbReference>
<dbReference type="CDD" id="cd17316">
    <property type="entry name" value="MFS_SV2_like"/>
    <property type="match status" value="1"/>
</dbReference>
<dbReference type="FunFam" id="1.20.1250.20:FF:000027">
    <property type="entry name" value="Sialic acid transporter NanT"/>
    <property type="match status" value="1"/>
</dbReference>
<dbReference type="FunFam" id="1.20.1250.20:FF:000038">
    <property type="entry name" value="Sialic acid transporter NanT"/>
    <property type="match status" value="1"/>
</dbReference>
<dbReference type="Gene3D" id="1.20.1250.20">
    <property type="entry name" value="MFS general substrate transporter like domains"/>
    <property type="match status" value="2"/>
</dbReference>
<dbReference type="HAMAP" id="MF_01238">
    <property type="entry name" value="MFS_NanT"/>
    <property type="match status" value="1"/>
</dbReference>
<dbReference type="InterPro" id="IPR011701">
    <property type="entry name" value="MFS"/>
</dbReference>
<dbReference type="InterPro" id="IPR020846">
    <property type="entry name" value="MFS_dom"/>
</dbReference>
<dbReference type="InterPro" id="IPR036259">
    <property type="entry name" value="MFS_trans_sf"/>
</dbReference>
<dbReference type="InterPro" id="IPR004742">
    <property type="entry name" value="SA_transporter"/>
</dbReference>
<dbReference type="NCBIfam" id="TIGR00891">
    <property type="entry name" value="2A0112"/>
    <property type="match status" value="1"/>
</dbReference>
<dbReference type="NCBIfam" id="NF003024">
    <property type="entry name" value="PRK03893.1"/>
    <property type="match status" value="1"/>
</dbReference>
<dbReference type="PANTHER" id="PTHR23508">
    <property type="entry name" value="CARBOXYLIC ACID TRANSPORTER PROTEIN HOMOLOG"/>
    <property type="match status" value="1"/>
</dbReference>
<dbReference type="PANTHER" id="PTHR23508:SF3">
    <property type="entry name" value="SIALIC ACID TRANSPORTER NANT"/>
    <property type="match status" value="1"/>
</dbReference>
<dbReference type="Pfam" id="PF07690">
    <property type="entry name" value="MFS_1"/>
    <property type="match status" value="1"/>
</dbReference>
<dbReference type="SUPFAM" id="SSF103473">
    <property type="entry name" value="MFS general substrate transporter"/>
    <property type="match status" value="1"/>
</dbReference>
<dbReference type="PROSITE" id="PS50850">
    <property type="entry name" value="MFS"/>
    <property type="match status" value="1"/>
</dbReference>
<name>NANT_ECO8A</name>
<feature type="chain" id="PRO_1000214045" description="Sialic acid transporter NanT">
    <location>
        <begin position="1"/>
        <end position="496"/>
    </location>
</feature>
<feature type="transmembrane region" description="Helical" evidence="1">
    <location>
        <begin position="22"/>
        <end position="42"/>
    </location>
</feature>
<feature type="transmembrane region" description="Helical" evidence="1">
    <location>
        <begin position="58"/>
        <end position="78"/>
    </location>
</feature>
<feature type="transmembrane region" description="Helical" evidence="1">
    <location>
        <begin position="92"/>
        <end position="112"/>
    </location>
</feature>
<feature type="transmembrane region" description="Helical" evidence="1">
    <location>
        <begin position="116"/>
        <end position="136"/>
    </location>
</feature>
<feature type="transmembrane region" description="Helical" evidence="1">
    <location>
        <begin position="148"/>
        <end position="168"/>
    </location>
</feature>
<feature type="transmembrane region" description="Helical" evidence="1">
    <location>
        <begin position="170"/>
        <end position="190"/>
    </location>
</feature>
<feature type="transmembrane region" description="Helical" evidence="1">
    <location>
        <begin position="224"/>
        <end position="244"/>
    </location>
</feature>
<feature type="transmembrane region" description="Helical" evidence="1">
    <location>
        <begin position="247"/>
        <end position="267"/>
    </location>
</feature>
<feature type="transmembrane region" description="Helical" evidence="1">
    <location>
        <begin position="278"/>
        <end position="298"/>
    </location>
</feature>
<feature type="transmembrane region" description="Helical" evidence="1">
    <location>
        <begin position="313"/>
        <end position="333"/>
    </location>
</feature>
<feature type="transmembrane region" description="Helical" evidence="1">
    <location>
        <begin position="353"/>
        <end position="375"/>
    </location>
</feature>
<feature type="transmembrane region" description="Helical" evidence="1">
    <location>
        <begin position="406"/>
        <end position="426"/>
    </location>
</feature>
<feature type="transmembrane region" description="Helical" evidence="1">
    <location>
        <begin position="431"/>
        <end position="451"/>
    </location>
</feature>
<accession>B7M0T6</accession>
<gene>
    <name evidence="1" type="primary">nanT</name>
    <name type="ordered locus">ECIAI1_3366</name>
</gene>
<organism>
    <name type="scientific">Escherichia coli O8 (strain IAI1)</name>
    <dbReference type="NCBI Taxonomy" id="585034"/>
    <lineage>
        <taxon>Bacteria</taxon>
        <taxon>Pseudomonadati</taxon>
        <taxon>Pseudomonadota</taxon>
        <taxon>Gammaproteobacteria</taxon>
        <taxon>Enterobacterales</taxon>
        <taxon>Enterobacteriaceae</taxon>
        <taxon>Escherichia</taxon>
    </lineage>
</organism>
<evidence type="ECO:0000255" key="1">
    <source>
        <dbReference type="HAMAP-Rule" id="MF_01238"/>
    </source>
</evidence>
<sequence>MSTTTQNIPWYRHLNRAQWRAFSAAWLGYLLDGFDFVLIALVLTEVQGEFGLTTVQAASLISAAFISRWFGGLMLGAMGDRYGRRLAMVTSIVLFSAGTLACGFAPGYITMFIARLVIGMGMAGEYGSSATYVIESWPKHLRNKASGFLISGFSVGAVVAAQVYSLVVPVWGWRALFFIGILPIIFALWLRKNIPEAEDWKEKHAGKAPVRTMVDILYRGEHRIANIVMTLAAATALWFCFAGNLQNAAIVAVLGLLCAAIFISFMVQSTGKRWPTGVMLMVVVLFAFLYSWPIQALLPTYLKTDLAYNPHTVANVLFFSGFGAAVGCCVGGFLGDWLGTRKAYVCSLLASQLLIIPVFAIGGANVWVLGLLLFFQQMLGQGIAGILPKLIGGYFDTDQRAAGLGFTYNVGALGGALAPIIGALIAQRLDLGTALASLSFSLTFVVILLIGLDMPSRVQRWLRPEALRTHDAIDGKPFSGAVPFGSAKNDLVKTKS</sequence>
<protein>
    <recommendedName>
        <fullName evidence="1">Sialic acid transporter NanT</fullName>
    </recommendedName>
    <alternativeName>
        <fullName evidence="1">Sialic acid permease</fullName>
    </alternativeName>
    <alternativeName>
        <fullName evidence="1">Sialic acid/H(+) symporter</fullName>
    </alternativeName>
</protein>
<reference key="1">
    <citation type="journal article" date="2009" name="PLoS Genet.">
        <title>Organised genome dynamics in the Escherichia coli species results in highly diverse adaptive paths.</title>
        <authorList>
            <person name="Touchon M."/>
            <person name="Hoede C."/>
            <person name="Tenaillon O."/>
            <person name="Barbe V."/>
            <person name="Baeriswyl S."/>
            <person name="Bidet P."/>
            <person name="Bingen E."/>
            <person name="Bonacorsi S."/>
            <person name="Bouchier C."/>
            <person name="Bouvet O."/>
            <person name="Calteau A."/>
            <person name="Chiapello H."/>
            <person name="Clermont O."/>
            <person name="Cruveiller S."/>
            <person name="Danchin A."/>
            <person name="Diard M."/>
            <person name="Dossat C."/>
            <person name="Karoui M.E."/>
            <person name="Frapy E."/>
            <person name="Garry L."/>
            <person name="Ghigo J.M."/>
            <person name="Gilles A.M."/>
            <person name="Johnson J."/>
            <person name="Le Bouguenec C."/>
            <person name="Lescat M."/>
            <person name="Mangenot S."/>
            <person name="Martinez-Jehanne V."/>
            <person name="Matic I."/>
            <person name="Nassif X."/>
            <person name="Oztas S."/>
            <person name="Petit M.A."/>
            <person name="Pichon C."/>
            <person name="Rouy Z."/>
            <person name="Ruf C.S."/>
            <person name="Schneider D."/>
            <person name="Tourret J."/>
            <person name="Vacherie B."/>
            <person name="Vallenet D."/>
            <person name="Medigue C."/>
            <person name="Rocha E.P.C."/>
            <person name="Denamur E."/>
        </authorList>
    </citation>
    <scope>NUCLEOTIDE SEQUENCE [LARGE SCALE GENOMIC DNA]</scope>
    <source>
        <strain>IAI1</strain>
    </source>
</reference>
<proteinExistence type="inferred from homology"/>